<name>1433Z_BOMMO</name>
<feature type="chain" id="PRO_0000320251" description="14-3-3 protein zeta">
    <location>
        <begin position="1"/>
        <end position="247"/>
    </location>
</feature>
<feature type="sequence conflict" description="In Ref. 2; ABD36180." evidence="2" ref="2">
    <original>L</original>
    <variation>W</variation>
    <location>
        <position position="100"/>
    </location>
</feature>
<sequence>MSVDKEELVQRAKLAEQAERYDDMAAAMKEVTETGVELSNEERNLLSVAYKNVVGARRSSWRVISSIEQKTEGSERKQQMAKEYRVKVEKELREICYDVLGLLDKHLIPKASNPESKVFYLKMKGDYYRYLAEVATGETRHSVVEDSQKAYQDAFEISKAKMQPTHPIRLGLALNFSVFYYEILNSPDKACQLAKQAFDDAIAELDTLNEDSYKDSTLIMQLLRDNLTLWTSDTQGDGDEPAEGGDN</sequence>
<accession>Q2F637</accession>
<accession>A2TK61</accession>
<evidence type="ECO:0000250" key="1"/>
<evidence type="ECO:0000305" key="2"/>
<protein>
    <recommendedName>
        <fullName>14-3-3 protein zeta</fullName>
    </recommendedName>
</protein>
<organism>
    <name type="scientific">Bombyx mori</name>
    <name type="common">Silk moth</name>
    <dbReference type="NCBI Taxonomy" id="7091"/>
    <lineage>
        <taxon>Eukaryota</taxon>
        <taxon>Metazoa</taxon>
        <taxon>Ecdysozoa</taxon>
        <taxon>Arthropoda</taxon>
        <taxon>Hexapoda</taxon>
        <taxon>Insecta</taxon>
        <taxon>Pterygota</taxon>
        <taxon>Neoptera</taxon>
        <taxon>Endopterygota</taxon>
        <taxon>Lepidoptera</taxon>
        <taxon>Glossata</taxon>
        <taxon>Ditrysia</taxon>
        <taxon>Bombycoidea</taxon>
        <taxon>Bombycidae</taxon>
        <taxon>Bombycinae</taxon>
        <taxon>Bombyx</taxon>
    </lineage>
</organism>
<proteinExistence type="evidence at transcript level"/>
<reference key="1">
    <citation type="submission" date="2007-01" db="EMBL/GenBank/DDBJ databases">
        <title>Molecular cloning and cellular distribution of 14-3-3 gene of silkworm Bombyx mori.</title>
        <authorList>
            <person name="Kong L."/>
            <person name="Zhang Y."/>
        </authorList>
    </citation>
    <scope>NUCLEOTIDE SEQUENCE [MRNA]</scope>
</reference>
<reference key="2">
    <citation type="submission" date="2005-11" db="EMBL/GenBank/DDBJ databases">
        <title>Blast silkworm EST database for functional genes.</title>
        <authorList>
            <person name="Niu B.L."/>
            <person name="Meng Z.Q."/>
            <person name="Weng H.B."/>
            <person name="Shen W.F."/>
            <person name="He L.H."/>
            <person name="Zheng K.F."/>
            <person name="Ye S.T."/>
            <person name="Lin T.B."/>
            <person name="Chen J.E."/>
        </authorList>
    </citation>
    <scope>NUCLEOTIDE SEQUENCE [LARGE SCALE MRNA]</scope>
</reference>
<keyword id="KW-0963">Cytoplasm</keyword>
<keyword id="KW-1185">Reference proteome</keyword>
<dbReference type="EMBL" id="EF210316">
    <property type="protein sequence ID" value="ABN09647.1"/>
    <property type="molecule type" value="mRNA"/>
</dbReference>
<dbReference type="EMBL" id="DQ311235">
    <property type="protein sequence ID" value="ABD36180.1"/>
    <property type="molecule type" value="mRNA"/>
</dbReference>
<dbReference type="RefSeq" id="NP_001040164.1">
    <property type="nucleotide sequence ID" value="NM_001046699.1"/>
</dbReference>
<dbReference type="RefSeq" id="XP_021207682.1">
    <property type="nucleotide sequence ID" value="XM_021352007.3"/>
</dbReference>
<dbReference type="RefSeq" id="XP_021207685.1">
    <property type="nucleotide sequence ID" value="XM_021352010.3"/>
</dbReference>
<dbReference type="RefSeq" id="XP_062524428.1">
    <property type="nucleotide sequence ID" value="XM_062668444.1"/>
</dbReference>
<dbReference type="RefSeq" id="XP_062524429.1">
    <property type="nucleotide sequence ID" value="XM_062668445.1"/>
</dbReference>
<dbReference type="RefSeq" id="XP_062524430.1">
    <property type="nucleotide sequence ID" value="XM_062668446.1"/>
</dbReference>
<dbReference type="RefSeq" id="XP_062524431.1">
    <property type="nucleotide sequence ID" value="XM_062668447.1"/>
</dbReference>
<dbReference type="SMR" id="Q2F637"/>
<dbReference type="FunCoup" id="Q2F637">
    <property type="interactions" value="1202"/>
</dbReference>
<dbReference type="STRING" id="7091.Q2F637"/>
<dbReference type="EnsemblMetazoa" id="XM_021352007.2">
    <property type="protein sequence ID" value="XP_021207682.1"/>
    <property type="gene ID" value="GeneID_692854"/>
</dbReference>
<dbReference type="EnsemblMetazoa" id="XM_021352008.2">
    <property type="protein sequence ID" value="XP_021207683.1"/>
    <property type="gene ID" value="GeneID_692854"/>
</dbReference>
<dbReference type="EnsemblMetazoa" id="XM_021352009.2">
    <property type="protein sequence ID" value="XP_021207684.1"/>
    <property type="gene ID" value="GeneID_692854"/>
</dbReference>
<dbReference type="EnsemblMetazoa" id="XM_021352010.2">
    <property type="protein sequence ID" value="XP_021207685.1"/>
    <property type="gene ID" value="GeneID_692854"/>
</dbReference>
<dbReference type="GeneID" id="692854"/>
<dbReference type="KEGG" id="bmor:692854"/>
<dbReference type="CTD" id="36059"/>
<dbReference type="eggNOG" id="KOG0841">
    <property type="taxonomic scope" value="Eukaryota"/>
</dbReference>
<dbReference type="InParanoid" id="Q2F637"/>
<dbReference type="OrthoDB" id="176429at7088"/>
<dbReference type="Proteomes" id="UP000005204">
    <property type="component" value="Unassembled WGS sequence"/>
</dbReference>
<dbReference type="GO" id="GO:0005737">
    <property type="term" value="C:cytoplasm"/>
    <property type="evidence" value="ECO:0007669"/>
    <property type="project" value="UniProtKB-SubCell"/>
</dbReference>
<dbReference type="CDD" id="cd11310">
    <property type="entry name" value="14-3-3_1"/>
    <property type="match status" value="1"/>
</dbReference>
<dbReference type="FunFam" id="1.20.190.20:FF:000001">
    <property type="entry name" value="14-3-3 gamma 1"/>
    <property type="match status" value="1"/>
</dbReference>
<dbReference type="Gene3D" id="1.20.190.20">
    <property type="entry name" value="14-3-3 domain"/>
    <property type="match status" value="1"/>
</dbReference>
<dbReference type="InterPro" id="IPR000308">
    <property type="entry name" value="14-3-3"/>
</dbReference>
<dbReference type="InterPro" id="IPR023409">
    <property type="entry name" value="14-3-3_CS"/>
</dbReference>
<dbReference type="InterPro" id="IPR036815">
    <property type="entry name" value="14-3-3_dom_sf"/>
</dbReference>
<dbReference type="InterPro" id="IPR023410">
    <property type="entry name" value="14-3-3_domain"/>
</dbReference>
<dbReference type="PANTHER" id="PTHR18860">
    <property type="entry name" value="14-3-3 PROTEIN"/>
    <property type="match status" value="1"/>
</dbReference>
<dbReference type="Pfam" id="PF00244">
    <property type="entry name" value="14-3-3"/>
    <property type="match status" value="1"/>
</dbReference>
<dbReference type="PIRSF" id="PIRSF000868">
    <property type="entry name" value="14-3-3"/>
    <property type="match status" value="1"/>
</dbReference>
<dbReference type="PRINTS" id="PR00305">
    <property type="entry name" value="1433ZETA"/>
</dbReference>
<dbReference type="SMART" id="SM00101">
    <property type="entry name" value="14_3_3"/>
    <property type="match status" value="1"/>
</dbReference>
<dbReference type="SUPFAM" id="SSF48445">
    <property type="entry name" value="14-3-3 protein"/>
    <property type="match status" value="1"/>
</dbReference>
<dbReference type="PROSITE" id="PS00796">
    <property type="entry name" value="1433_1"/>
    <property type="match status" value="1"/>
</dbReference>
<dbReference type="PROSITE" id="PS00797">
    <property type="entry name" value="1433_2"/>
    <property type="match status" value="1"/>
</dbReference>
<gene>
    <name type="primary">14-3-3zeta</name>
</gene>
<comment type="function">
    <text evidence="1">Adapter protein implicated in the regulation of a large spectrum of both general and specialized signaling pathways. Binds to a large number of partners, usually by recognition of a phosphoserine or phosphothreonine motif. Binding generally results in the modulation of the activity of the binding partner (By similarity).</text>
</comment>
<comment type="subunit">
    <text evidence="1">Homodimer.</text>
</comment>
<comment type="subcellular location">
    <subcellularLocation>
        <location evidence="1">Cytoplasm</location>
    </subcellularLocation>
</comment>
<comment type="similarity">
    <text evidence="2">Belongs to the 14-3-3 family.</text>
</comment>